<protein>
    <recommendedName>
        <fullName evidence="1">Methionyl-tRNA formyltransferase</fullName>
        <ecNumber evidence="1">2.1.2.9</ecNumber>
    </recommendedName>
</protein>
<comment type="function">
    <text evidence="1">Attaches a formyl group to the free amino group of methionyl-tRNA(fMet). The formyl group appears to play a dual role in the initiator identity of N-formylmethionyl-tRNA by promoting its recognition by IF2 and preventing the misappropriation of this tRNA by the elongation apparatus.</text>
</comment>
<comment type="catalytic activity">
    <reaction evidence="1">
        <text>L-methionyl-tRNA(fMet) + (6R)-10-formyltetrahydrofolate = N-formyl-L-methionyl-tRNA(fMet) + (6S)-5,6,7,8-tetrahydrofolate + H(+)</text>
        <dbReference type="Rhea" id="RHEA:24380"/>
        <dbReference type="Rhea" id="RHEA-COMP:9952"/>
        <dbReference type="Rhea" id="RHEA-COMP:9953"/>
        <dbReference type="ChEBI" id="CHEBI:15378"/>
        <dbReference type="ChEBI" id="CHEBI:57453"/>
        <dbReference type="ChEBI" id="CHEBI:78530"/>
        <dbReference type="ChEBI" id="CHEBI:78844"/>
        <dbReference type="ChEBI" id="CHEBI:195366"/>
        <dbReference type="EC" id="2.1.2.9"/>
    </reaction>
</comment>
<comment type="similarity">
    <text evidence="1">Belongs to the Fmt family.</text>
</comment>
<keyword id="KW-0648">Protein biosynthesis</keyword>
<keyword id="KW-1185">Reference proteome</keyword>
<keyword id="KW-0808">Transferase</keyword>
<organism>
    <name type="scientific">Levilactobacillus brevis (strain ATCC 367 / BCRC 12310 / CIP 105137 / JCM 1170 / LMG 11437 / NCIMB 947 / NCTC 947)</name>
    <name type="common">Lactobacillus brevis</name>
    <dbReference type="NCBI Taxonomy" id="387344"/>
    <lineage>
        <taxon>Bacteria</taxon>
        <taxon>Bacillati</taxon>
        <taxon>Bacillota</taxon>
        <taxon>Bacilli</taxon>
        <taxon>Lactobacillales</taxon>
        <taxon>Lactobacillaceae</taxon>
        <taxon>Levilactobacillus</taxon>
    </lineage>
</organism>
<proteinExistence type="inferred from homology"/>
<evidence type="ECO:0000255" key="1">
    <source>
        <dbReference type="HAMAP-Rule" id="MF_00182"/>
    </source>
</evidence>
<sequence length="314" mass="33871">MTSVIFMGTPQFSAPILSSLIDNGYDVLAVVTQPDRRVGRKHVLTASPVKQVAVAHDIEVLQPEKISGSSEMARAIELAPDLIVTAAFGQFLPTKLLKAAKVAAVNVHASLLPKYRGGAPVHYAIMNGDSETGVSIMFMEKKMDAGAVLAQRAIPITDQDDVGTMFAKLSDLGRDLLLETLPKLLAGELTPVPQDESQVSFSPTIKPEEERVDINLSARMIDCKVRALRPFPTAHIYLNGVRTKLWHVTVLDQKTDLQPGAVVSRDKHHLAIATGEQGVLSLDELQPAGKPKLSITDYLNGTTDALTVGEQVAE</sequence>
<gene>
    <name evidence="1" type="primary">fmt</name>
    <name type="ordered locus">LVIS_0965</name>
</gene>
<name>FMT_LEVBA</name>
<accession>Q03RS3</accession>
<reference key="1">
    <citation type="journal article" date="2006" name="Proc. Natl. Acad. Sci. U.S.A.">
        <title>Comparative genomics of the lactic acid bacteria.</title>
        <authorList>
            <person name="Makarova K.S."/>
            <person name="Slesarev A."/>
            <person name="Wolf Y.I."/>
            <person name="Sorokin A."/>
            <person name="Mirkin B."/>
            <person name="Koonin E.V."/>
            <person name="Pavlov A."/>
            <person name="Pavlova N."/>
            <person name="Karamychev V."/>
            <person name="Polouchine N."/>
            <person name="Shakhova V."/>
            <person name="Grigoriev I."/>
            <person name="Lou Y."/>
            <person name="Rohksar D."/>
            <person name="Lucas S."/>
            <person name="Huang K."/>
            <person name="Goodstein D.M."/>
            <person name="Hawkins T."/>
            <person name="Plengvidhya V."/>
            <person name="Welker D."/>
            <person name="Hughes J."/>
            <person name="Goh Y."/>
            <person name="Benson A."/>
            <person name="Baldwin K."/>
            <person name="Lee J.-H."/>
            <person name="Diaz-Muniz I."/>
            <person name="Dosti B."/>
            <person name="Smeianov V."/>
            <person name="Wechter W."/>
            <person name="Barabote R."/>
            <person name="Lorca G."/>
            <person name="Altermann E."/>
            <person name="Barrangou R."/>
            <person name="Ganesan B."/>
            <person name="Xie Y."/>
            <person name="Rawsthorne H."/>
            <person name="Tamir D."/>
            <person name="Parker C."/>
            <person name="Breidt F."/>
            <person name="Broadbent J.R."/>
            <person name="Hutkins R."/>
            <person name="O'Sullivan D."/>
            <person name="Steele J."/>
            <person name="Unlu G."/>
            <person name="Saier M.H. Jr."/>
            <person name="Klaenhammer T."/>
            <person name="Richardson P."/>
            <person name="Kozyavkin S."/>
            <person name="Weimer B.C."/>
            <person name="Mills D.A."/>
        </authorList>
    </citation>
    <scope>NUCLEOTIDE SEQUENCE [LARGE SCALE GENOMIC DNA]</scope>
    <source>
        <strain>ATCC 367 / BCRC 12310 / CIP 105137 / JCM 1170 / LMG 11437 / NCIMB 947 / NCTC 947</strain>
    </source>
</reference>
<dbReference type="EC" id="2.1.2.9" evidence="1"/>
<dbReference type="EMBL" id="CP000416">
    <property type="protein sequence ID" value="ABJ64099.1"/>
    <property type="molecule type" value="Genomic_DNA"/>
</dbReference>
<dbReference type="RefSeq" id="WP_011667689.1">
    <property type="nucleotide sequence ID" value="NC_008497.1"/>
</dbReference>
<dbReference type="SMR" id="Q03RS3"/>
<dbReference type="STRING" id="387344.LVIS_0965"/>
<dbReference type="KEGG" id="lbr:LVIS_0965"/>
<dbReference type="eggNOG" id="COG0223">
    <property type="taxonomic scope" value="Bacteria"/>
</dbReference>
<dbReference type="HOGENOM" id="CLU_033347_1_1_9"/>
<dbReference type="Proteomes" id="UP000001652">
    <property type="component" value="Chromosome"/>
</dbReference>
<dbReference type="GO" id="GO:0005829">
    <property type="term" value="C:cytosol"/>
    <property type="evidence" value="ECO:0007669"/>
    <property type="project" value="TreeGrafter"/>
</dbReference>
<dbReference type="GO" id="GO:0004479">
    <property type="term" value="F:methionyl-tRNA formyltransferase activity"/>
    <property type="evidence" value="ECO:0007669"/>
    <property type="project" value="UniProtKB-UniRule"/>
</dbReference>
<dbReference type="CDD" id="cd08646">
    <property type="entry name" value="FMT_core_Met-tRNA-FMT_N"/>
    <property type="match status" value="1"/>
</dbReference>
<dbReference type="CDD" id="cd08704">
    <property type="entry name" value="Met_tRNA_FMT_C"/>
    <property type="match status" value="1"/>
</dbReference>
<dbReference type="FunFam" id="3.40.50.170:FF:000004">
    <property type="entry name" value="Methionyl-tRNA formyltransferase"/>
    <property type="match status" value="1"/>
</dbReference>
<dbReference type="Gene3D" id="3.10.25.10">
    <property type="entry name" value="Formyl transferase, C-terminal domain"/>
    <property type="match status" value="1"/>
</dbReference>
<dbReference type="Gene3D" id="3.40.50.170">
    <property type="entry name" value="Formyl transferase, N-terminal domain"/>
    <property type="match status" value="1"/>
</dbReference>
<dbReference type="HAMAP" id="MF_00182">
    <property type="entry name" value="Formyl_trans"/>
    <property type="match status" value="1"/>
</dbReference>
<dbReference type="InterPro" id="IPR005794">
    <property type="entry name" value="Fmt"/>
</dbReference>
<dbReference type="InterPro" id="IPR005793">
    <property type="entry name" value="Formyl_trans_C"/>
</dbReference>
<dbReference type="InterPro" id="IPR037022">
    <property type="entry name" value="Formyl_trans_C_sf"/>
</dbReference>
<dbReference type="InterPro" id="IPR002376">
    <property type="entry name" value="Formyl_transf_N"/>
</dbReference>
<dbReference type="InterPro" id="IPR036477">
    <property type="entry name" value="Formyl_transf_N_sf"/>
</dbReference>
<dbReference type="InterPro" id="IPR011034">
    <property type="entry name" value="Formyl_transferase-like_C_sf"/>
</dbReference>
<dbReference type="InterPro" id="IPR001555">
    <property type="entry name" value="GART_AS"/>
</dbReference>
<dbReference type="InterPro" id="IPR044135">
    <property type="entry name" value="Met-tRNA-FMT_C"/>
</dbReference>
<dbReference type="InterPro" id="IPR041711">
    <property type="entry name" value="Met-tRNA-FMT_N"/>
</dbReference>
<dbReference type="NCBIfam" id="TIGR00460">
    <property type="entry name" value="fmt"/>
    <property type="match status" value="1"/>
</dbReference>
<dbReference type="PANTHER" id="PTHR11138">
    <property type="entry name" value="METHIONYL-TRNA FORMYLTRANSFERASE"/>
    <property type="match status" value="1"/>
</dbReference>
<dbReference type="PANTHER" id="PTHR11138:SF5">
    <property type="entry name" value="METHIONYL-TRNA FORMYLTRANSFERASE, MITOCHONDRIAL"/>
    <property type="match status" value="1"/>
</dbReference>
<dbReference type="Pfam" id="PF02911">
    <property type="entry name" value="Formyl_trans_C"/>
    <property type="match status" value="1"/>
</dbReference>
<dbReference type="Pfam" id="PF00551">
    <property type="entry name" value="Formyl_trans_N"/>
    <property type="match status" value="1"/>
</dbReference>
<dbReference type="SUPFAM" id="SSF50486">
    <property type="entry name" value="FMT C-terminal domain-like"/>
    <property type="match status" value="1"/>
</dbReference>
<dbReference type="SUPFAM" id="SSF53328">
    <property type="entry name" value="Formyltransferase"/>
    <property type="match status" value="1"/>
</dbReference>
<dbReference type="PROSITE" id="PS00373">
    <property type="entry name" value="GART"/>
    <property type="match status" value="1"/>
</dbReference>
<feature type="chain" id="PRO_1000020083" description="Methionyl-tRNA formyltransferase">
    <location>
        <begin position="1"/>
        <end position="314"/>
    </location>
</feature>
<feature type="binding site" evidence="1">
    <location>
        <begin position="110"/>
        <end position="113"/>
    </location>
    <ligand>
        <name>(6S)-5,6,7,8-tetrahydrofolate</name>
        <dbReference type="ChEBI" id="CHEBI:57453"/>
    </ligand>
</feature>